<keyword id="KW-0687">Ribonucleoprotein</keyword>
<keyword id="KW-0689">Ribosomal protein</keyword>
<evidence type="ECO:0000255" key="1">
    <source>
        <dbReference type="HAMAP-Rule" id="MF_01368"/>
    </source>
</evidence>
<evidence type="ECO:0000305" key="2"/>
<comment type="subunit">
    <text evidence="1">Part of the 50S ribosomal subunit. Contacts protein L32.</text>
</comment>
<comment type="similarity">
    <text evidence="1">Belongs to the bacterial ribosomal protein bL17 family.</text>
</comment>
<sequence>MGYRKLGRTSDQRKAMLRDLATSLIVSERIETTEARAKEVRSVVEKLITLGKKGDLASRRNAAKTLRNVEILNEDDSTQTALQKLFGEIAERYSERQGGYTRILKVGPRRGDGAESVIIELV</sequence>
<proteinExistence type="inferred from homology"/>
<gene>
    <name evidence="1" type="primary">rplQ</name>
    <name type="ordered locus">SE_1796</name>
</gene>
<protein>
    <recommendedName>
        <fullName evidence="1">Large ribosomal subunit protein bL17</fullName>
    </recommendedName>
    <alternativeName>
        <fullName evidence="2">50S ribosomal protein L17</fullName>
    </alternativeName>
</protein>
<name>RL17_STAES</name>
<dbReference type="EMBL" id="AE015929">
    <property type="protein sequence ID" value="AAO05437.1"/>
    <property type="molecule type" value="Genomic_DNA"/>
</dbReference>
<dbReference type="RefSeq" id="NP_765351.1">
    <property type="nucleotide sequence ID" value="NC_004461.1"/>
</dbReference>
<dbReference type="RefSeq" id="WP_001829718.1">
    <property type="nucleotide sequence ID" value="NZ_WBME01000007.1"/>
</dbReference>
<dbReference type="SMR" id="Q8CRI5"/>
<dbReference type="GeneID" id="50018100"/>
<dbReference type="KEGG" id="sep:SE_1796"/>
<dbReference type="PATRIC" id="fig|176280.10.peg.1753"/>
<dbReference type="eggNOG" id="COG0203">
    <property type="taxonomic scope" value="Bacteria"/>
</dbReference>
<dbReference type="HOGENOM" id="CLU_074407_2_2_9"/>
<dbReference type="OrthoDB" id="9809073at2"/>
<dbReference type="Proteomes" id="UP000001411">
    <property type="component" value="Chromosome"/>
</dbReference>
<dbReference type="GO" id="GO:0022625">
    <property type="term" value="C:cytosolic large ribosomal subunit"/>
    <property type="evidence" value="ECO:0007669"/>
    <property type="project" value="TreeGrafter"/>
</dbReference>
<dbReference type="GO" id="GO:0003735">
    <property type="term" value="F:structural constituent of ribosome"/>
    <property type="evidence" value="ECO:0007669"/>
    <property type="project" value="InterPro"/>
</dbReference>
<dbReference type="GO" id="GO:0006412">
    <property type="term" value="P:translation"/>
    <property type="evidence" value="ECO:0007669"/>
    <property type="project" value="UniProtKB-UniRule"/>
</dbReference>
<dbReference type="FunFam" id="3.90.1030.10:FF:000002">
    <property type="entry name" value="50S ribosomal protein L17"/>
    <property type="match status" value="1"/>
</dbReference>
<dbReference type="Gene3D" id="3.90.1030.10">
    <property type="entry name" value="Ribosomal protein L17"/>
    <property type="match status" value="1"/>
</dbReference>
<dbReference type="HAMAP" id="MF_01368">
    <property type="entry name" value="Ribosomal_bL17"/>
    <property type="match status" value="1"/>
</dbReference>
<dbReference type="InterPro" id="IPR000456">
    <property type="entry name" value="Ribosomal_bL17"/>
</dbReference>
<dbReference type="InterPro" id="IPR047859">
    <property type="entry name" value="Ribosomal_bL17_CS"/>
</dbReference>
<dbReference type="InterPro" id="IPR036373">
    <property type="entry name" value="Ribosomal_bL17_sf"/>
</dbReference>
<dbReference type="NCBIfam" id="TIGR00059">
    <property type="entry name" value="L17"/>
    <property type="match status" value="1"/>
</dbReference>
<dbReference type="PANTHER" id="PTHR14413:SF16">
    <property type="entry name" value="LARGE RIBOSOMAL SUBUNIT PROTEIN BL17M"/>
    <property type="match status" value="1"/>
</dbReference>
<dbReference type="PANTHER" id="PTHR14413">
    <property type="entry name" value="RIBOSOMAL PROTEIN L17"/>
    <property type="match status" value="1"/>
</dbReference>
<dbReference type="Pfam" id="PF01196">
    <property type="entry name" value="Ribosomal_L17"/>
    <property type="match status" value="1"/>
</dbReference>
<dbReference type="SUPFAM" id="SSF64263">
    <property type="entry name" value="Prokaryotic ribosomal protein L17"/>
    <property type="match status" value="1"/>
</dbReference>
<dbReference type="PROSITE" id="PS01167">
    <property type="entry name" value="RIBOSOMAL_L17"/>
    <property type="match status" value="1"/>
</dbReference>
<organism>
    <name type="scientific">Staphylococcus epidermidis (strain ATCC 12228 / FDA PCI 1200)</name>
    <dbReference type="NCBI Taxonomy" id="176280"/>
    <lineage>
        <taxon>Bacteria</taxon>
        <taxon>Bacillati</taxon>
        <taxon>Bacillota</taxon>
        <taxon>Bacilli</taxon>
        <taxon>Bacillales</taxon>
        <taxon>Staphylococcaceae</taxon>
        <taxon>Staphylococcus</taxon>
    </lineage>
</organism>
<reference key="1">
    <citation type="journal article" date="2003" name="Mol. Microbiol.">
        <title>Genome-based analysis of virulence genes in a non-biofilm-forming Staphylococcus epidermidis strain (ATCC 12228).</title>
        <authorList>
            <person name="Zhang Y.-Q."/>
            <person name="Ren S.-X."/>
            <person name="Li H.-L."/>
            <person name="Wang Y.-X."/>
            <person name="Fu G."/>
            <person name="Yang J."/>
            <person name="Qin Z.-Q."/>
            <person name="Miao Y.-G."/>
            <person name="Wang W.-Y."/>
            <person name="Chen R.-S."/>
            <person name="Shen Y."/>
            <person name="Chen Z."/>
            <person name="Yuan Z.-H."/>
            <person name="Zhao G.-P."/>
            <person name="Qu D."/>
            <person name="Danchin A."/>
            <person name="Wen Y.-M."/>
        </authorList>
    </citation>
    <scope>NUCLEOTIDE SEQUENCE [LARGE SCALE GENOMIC DNA]</scope>
    <source>
        <strain>ATCC 12228 / FDA PCI 1200</strain>
    </source>
</reference>
<accession>Q8CRI5</accession>
<feature type="chain" id="PRO_0000224144" description="Large ribosomal subunit protein bL17">
    <location>
        <begin position="1"/>
        <end position="122"/>
    </location>
</feature>